<accession>P20725</accession>
<proteinExistence type="inferred from homology"/>
<protein>
    <recommendedName>
        <fullName>General secretion pathway protein B</fullName>
    </recommendedName>
    <alternativeName>
        <fullName>Pullulanase operon protein PULB</fullName>
    </alternativeName>
</protein>
<dbReference type="EMBL" id="M29097">
    <property type="protein sequence ID" value="AAA61977.1"/>
    <property type="molecule type" value="Genomic_DNA"/>
</dbReference>
<dbReference type="PIR" id="B32880">
    <property type="entry name" value="B32880"/>
</dbReference>
<dbReference type="SMR" id="P20725"/>
<dbReference type="GO" id="GO:0016020">
    <property type="term" value="C:membrane"/>
    <property type="evidence" value="ECO:0007669"/>
    <property type="project" value="UniProtKB-SubCell"/>
</dbReference>
<dbReference type="GO" id="GO:0015627">
    <property type="term" value="C:type II protein secretion system complex"/>
    <property type="evidence" value="ECO:0007669"/>
    <property type="project" value="InterPro"/>
</dbReference>
<dbReference type="InterPro" id="IPR032389">
    <property type="entry name" value="GspB_C"/>
</dbReference>
<dbReference type="NCBIfam" id="NF037978">
    <property type="entry name" value="T2SS_GspB"/>
    <property type="match status" value="1"/>
</dbReference>
<dbReference type="Pfam" id="PF16537">
    <property type="entry name" value="T2SSB"/>
    <property type="match status" value="1"/>
</dbReference>
<organism>
    <name type="scientific">Klebsiella pneumoniae</name>
    <dbReference type="NCBI Taxonomy" id="573"/>
    <lineage>
        <taxon>Bacteria</taxon>
        <taxon>Pseudomonadati</taxon>
        <taxon>Pseudomonadota</taxon>
        <taxon>Gammaproteobacteria</taxon>
        <taxon>Enterobacterales</taxon>
        <taxon>Enterobacteriaceae</taxon>
        <taxon>Klebsiella/Raoultella group</taxon>
        <taxon>Klebsiella</taxon>
        <taxon>Klebsiella pneumoniae complex</taxon>
    </lineage>
</organism>
<reference key="1">
    <citation type="journal article" date="1989" name="J. Bacteriol.">
        <title>Klebsiella pneumoniae pulS gene encodes an outer membrane lipoprotein required for pullulanase secretion.</title>
        <authorList>
            <person name="D'Enfert C."/>
            <person name="Pugsley A.P."/>
        </authorList>
    </citation>
    <scope>NUCLEOTIDE SEQUENCE [GENOMIC DNA]</scope>
</reference>
<sequence length="174" mass="18923">MLVRPQEPYPQSEPPAAVGRMVQIPYVTVPLYAALLIALGWFGGEQWRNKPEPQPMRQSVAHAALVPLNQPAVKAAVAPVNAGPEIQAEPEIAIDEDNLPPLRYSAHVYASLADKRSIVLNGQSWKEGDSPLANLVIEHIQQDLTVFSFNGKTFTLAALDDWPGGAIEESPQAE</sequence>
<gene>
    <name type="primary">pulB</name>
</gene>
<name>GSPB_KLEPN</name>
<feature type="chain" id="PRO_0000214997" description="General secretion pathway protein B">
    <location>
        <begin position="1"/>
        <end position="174"/>
    </location>
</feature>
<feature type="transmembrane region" description="Helical" evidence="1">
    <location>
        <begin position="24"/>
        <end position="44"/>
    </location>
</feature>
<evidence type="ECO:0000255" key="1"/>
<evidence type="ECO:0000305" key="2"/>
<comment type="subcellular location">
    <subcellularLocation>
        <location evidence="2">Membrane</location>
        <topology evidence="2">Single-pass membrane protein</topology>
    </subcellularLocation>
</comment>
<comment type="similarity">
    <text evidence="2">Belongs to the ExeB/OutB/PulB family.</text>
</comment>
<keyword id="KW-0472">Membrane</keyword>
<keyword id="KW-0812">Transmembrane</keyword>
<keyword id="KW-1133">Transmembrane helix</keyword>
<keyword id="KW-0813">Transport</keyword>